<dbReference type="EMBL" id="X16460">
    <property type="protein sequence ID" value="CAA34480.1"/>
    <property type="molecule type" value="Genomic_DNA"/>
</dbReference>
<dbReference type="RefSeq" id="NP_052557.1">
    <property type="nucleotide sequence ID" value="NC_002124.1"/>
</dbReference>
<dbReference type="GO" id="GO:0006260">
    <property type="term" value="P:DNA replication"/>
    <property type="evidence" value="ECO:0007669"/>
    <property type="project" value="UniProtKB-KW"/>
</dbReference>
<dbReference type="InterPro" id="IPR009870">
    <property type="entry name" value="DUF1424"/>
</dbReference>
<dbReference type="Pfam" id="PF07232">
    <property type="entry name" value="DUF1424"/>
    <property type="match status" value="1"/>
</dbReference>
<proteinExistence type="predicted"/>
<comment type="function">
    <text>Possibly necessary for replication.</text>
</comment>
<name>Y36K_HALSN</name>
<sequence>MASQPEEGFGERLRKEVTVDTSRGVRATSTAQAVENFEGWYADQRDTQMVVEEATTGERVGFRTPNRFTPEYREMLYAKAQSLERGLREEWGDLLHTAMVTLTASTTEEDGGPRPLVDHLRDLLSSWSAVYDALRHTLEDREFEYLAIIEPTTPAGNGPAGYAHIHLGVFVKGPVVAEQFQDVLDAHVKNSEGAGREAHRAVVEDDEDEAAVSIRRSARPDREDGIENLGAYLAAYMAGEYGVEALAMPAHVRAFYAAMWATGTQWFRPSNGAQRHMQPESDDEESVEEWEMVGIAPEGDLEDEIIEVDPEQPRDDPYRRLRTPPPGG</sequence>
<evidence type="ECO:0000256" key="1">
    <source>
        <dbReference type="SAM" id="MobiDB-lite"/>
    </source>
</evidence>
<organism>
    <name type="scientific">Halobacterium sp. (strain GN101)</name>
    <dbReference type="NCBI Taxonomy" id="88773"/>
    <lineage>
        <taxon>Archaea</taxon>
        <taxon>Methanobacteriati</taxon>
        <taxon>Methanobacteriota</taxon>
        <taxon>Stenosarchaea group</taxon>
        <taxon>Halobacteria</taxon>
        <taxon>Halobacteriales</taxon>
        <taxon>Halobacteriaceae</taxon>
        <taxon>Halobacterium</taxon>
    </lineage>
</organism>
<protein>
    <recommendedName>
        <fullName>Uncharacterized 36 kDa protein</fullName>
    </recommendedName>
</protein>
<reference key="1">
    <citation type="journal article" date="1989" name="Nucleic Acids Res.">
        <title>DNA sequence of a small plasmid from Halobacterium strain GN101.</title>
        <authorList>
            <person name="Hall J."/>
            <person name="Hackett N.R."/>
        </authorList>
    </citation>
    <scope>NUCLEOTIDE SEQUENCE [GENOMIC DNA]</scope>
</reference>
<feature type="chain" id="PRO_0000066087" description="Uncharacterized 36 kDa protein">
    <location>
        <begin position="1"/>
        <end position="328"/>
    </location>
</feature>
<feature type="region of interest" description="Disordered" evidence="1">
    <location>
        <begin position="296"/>
        <end position="328"/>
    </location>
</feature>
<feature type="compositionally biased region" description="Acidic residues" evidence="1">
    <location>
        <begin position="299"/>
        <end position="310"/>
    </location>
</feature>
<geneLocation type="plasmid">
    <name>pHGN1</name>
</geneLocation>
<keyword id="KW-0235">DNA replication</keyword>
<keyword id="KW-0614">Plasmid</keyword>
<accession>P14321</accession>